<proteinExistence type="inferred from homology"/>
<feature type="chain" id="PRO_0000083665" description="3-isopropylmalate dehydrogenase">
    <location>
        <begin position="1"/>
        <end position="364"/>
    </location>
</feature>
<feature type="binding site" evidence="1">
    <location>
        <begin position="78"/>
        <end position="91"/>
    </location>
    <ligand>
        <name>NAD(+)</name>
        <dbReference type="ChEBI" id="CHEBI:57540"/>
    </ligand>
</feature>
<feature type="binding site" evidence="1">
    <location>
        <position position="99"/>
    </location>
    <ligand>
        <name>substrate</name>
    </ligand>
</feature>
<feature type="binding site" evidence="1">
    <location>
        <position position="109"/>
    </location>
    <ligand>
        <name>substrate</name>
    </ligand>
</feature>
<feature type="binding site" evidence="1">
    <location>
        <position position="138"/>
    </location>
    <ligand>
        <name>substrate</name>
    </ligand>
</feature>
<feature type="binding site" evidence="1">
    <location>
        <position position="227"/>
    </location>
    <ligand>
        <name>Mg(2+)</name>
        <dbReference type="ChEBI" id="CHEBI:18420"/>
    </ligand>
</feature>
<feature type="binding site" evidence="1">
    <location>
        <position position="227"/>
    </location>
    <ligand>
        <name>substrate</name>
    </ligand>
</feature>
<feature type="binding site" evidence="1">
    <location>
        <position position="251"/>
    </location>
    <ligand>
        <name>Mg(2+)</name>
        <dbReference type="ChEBI" id="CHEBI:18420"/>
    </ligand>
</feature>
<feature type="binding site" evidence="1">
    <location>
        <position position="255"/>
    </location>
    <ligand>
        <name>Mg(2+)</name>
        <dbReference type="ChEBI" id="CHEBI:18420"/>
    </ligand>
</feature>
<feature type="binding site" evidence="1">
    <location>
        <begin position="285"/>
        <end position="297"/>
    </location>
    <ligand>
        <name>NAD(+)</name>
        <dbReference type="ChEBI" id="CHEBI:57540"/>
    </ligand>
</feature>
<feature type="site" description="Important for catalysis" evidence="1">
    <location>
        <position position="145"/>
    </location>
</feature>
<feature type="site" description="Important for catalysis" evidence="1">
    <location>
        <position position="195"/>
    </location>
</feature>
<accession>Q9EVH5</accession>
<comment type="function">
    <text evidence="1">Catalyzes the oxidation of 3-carboxy-2-hydroxy-4-methylpentanoate (3-isopropylmalate) to 3-carboxy-4-methyl-2-oxopentanoate. The product decarboxylates to 4-methyl-2 oxopentanoate.</text>
</comment>
<comment type="catalytic activity">
    <reaction evidence="1">
        <text>(2R,3S)-3-isopropylmalate + NAD(+) = 4-methyl-2-oxopentanoate + CO2 + NADH</text>
        <dbReference type="Rhea" id="RHEA:32271"/>
        <dbReference type="ChEBI" id="CHEBI:16526"/>
        <dbReference type="ChEBI" id="CHEBI:17865"/>
        <dbReference type="ChEBI" id="CHEBI:35121"/>
        <dbReference type="ChEBI" id="CHEBI:57540"/>
        <dbReference type="ChEBI" id="CHEBI:57945"/>
        <dbReference type="EC" id="1.1.1.85"/>
    </reaction>
</comment>
<comment type="cofactor">
    <cofactor evidence="1">
        <name>Mg(2+)</name>
        <dbReference type="ChEBI" id="CHEBI:18420"/>
    </cofactor>
    <cofactor evidence="1">
        <name>Mn(2+)</name>
        <dbReference type="ChEBI" id="CHEBI:29035"/>
    </cofactor>
    <text evidence="1">Binds 1 Mg(2+) or Mn(2+) ion per subunit.</text>
</comment>
<comment type="pathway">
    <text evidence="1">Amino-acid biosynthesis; L-leucine biosynthesis; L-leucine from 3-methyl-2-oxobutanoate: step 3/4.</text>
</comment>
<comment type="subunit">
    <text evidence="1">Homodimer.</text>
</comment>
<comment type="subcellular location">
    <subcellularLocation>
        <location evidence="1">Cytoplasm</location>
    </subcellularLocation>
</comment>
<comment type="similarity">
    <text evidence="1">Belongs to the isocitrate and isopropylmalate dehydrogenases family. LeuB type 1 subfamily.</text>
</comment>
<dbReference type="EC" id="1.1.1.85" evidence="1"/>
<dbReference type="EMBL" id="AF197452">
    <property type="protein sequence ID" value="AAG31390.1"/>
    <property type="molecule type" value="Genomic_DNA"/>
</dbReference>
<dbReference type="SMR" id="Q9EVH5"/>
<dbReference type="UniPathway" id="UPA00048">
    <property type="reaction ID" value="UER00072"/>
</dbReference>
<dbReference type="GO" id="GO:0005829">
    <property type="term" value="C:cytosol"/>
    <property type="evidence" value="ECO:0007669"/>
    <property type="project" value="TreeGrafter"/>
</dbReference>
<dbReference type="GO" id="GO:0003862">
    <property type="term" value="F:3-isopropylmalate dehydrogenase activity"/>
    <property type="evidence" value="ECO:0007669"/>
    <property type="project" value="UniProtKB-UniRule"/>
</dbReference>
<dbReference type="GO" id="GO:0000287">
    <property type="term" value="F:magnesium ion binding"/>
    <property type="evidence" value="ECO:0007669"/>
    <property type="project" value="InterPro"/>
</dbReference>
<dbReference type="GO" id="GO:0051287">
    <property type="term" value="F:NAD binding"/>
    <property type="evidence" value="ECO:0007669"/>
    <property type="project" value="InterPro"/>
</dbReference>
<dbReference type="GO" id="GO:0009098">
    <property type="term" value="P:L-leucine biosynthetic process"/>
    <property type="evidence" value="ECO:0007669"/>
    <property type="project" value="UniProtKB-UniRule"/>
</dbReference>
<dbReference type="FunFam" id="3.40.718.10:FF:000006">
    <property type="entry name" value="3-isopropylmalate dehydrogenase"/>
    <property type="match status" value="1"/>
</dbReference>
<dbReference type="Gene3D" id="3.40.718.10">
    <property type="entry name" value="Isopropylmalate Dehydrogenase"/>
    <property type="match status" value="1"/>
</dbReference>
<dbReference type="HAMAP" id="MF_01033">
    <property type="entry name" value="LeuB_type1"/>
    <property type="match status" value="1"/>
</dbReference>
<dbReference type="InterPro" id="IPR019818">
    <property type="entry name" value="IsoCit/isopropylmalate_DH_CS"/>
</dbReference>
<dbReference type="InterPro" id="IPR024084">
    <property type="entry name" value="IsoPropMal-DH-like_dom"/>
</dbReference>
<dbReference type="InterPro" id="IPR004429">
    <property type="entry name" value="Isopropylmalate_DH"/>
</dbReference>
<dbReference type="NCBIfam" id="TIGR00169">
    <property type="entry name" value="leuB"/>
    <property type="match status" value="1"/>
</dbReference>
<dbReference type="PANTHER" id="PTHR42979">
    <property type="entry name" value="3-ISOPROPYLMALATE DEHYDROGENASE"/>
    <property type="match status" value="1"/>
</dbReference>
<dbReference type="PANTHER" id="PTHR42979:SF1">
    <property type="entry name" value="3-ISOPROPYLMALATE DEHYDROGENASE"/>
    <property type="match status" value="1"/>
</dbReference>
<dbReference type="Pfam" id="PF00180">
    <property type="entry name" value="Iso_dh"/>
    <property type="match status" value="1"/>
</dbReference>
<dbReference type="SMART" id="SM01329">
    <property type="entry name" value="Iso_dh"/>
    <property type="match status" value="1"/>
</dbReference>
<dbReference type="SUPFAM" id="SSF53659">
    <property type="entry name" value="Isocitrate/Isopropylmalate dehydrogenase-like"/>
    <property type="match status" value="1"/>
</dbReference>
<dbReference type="PROSITE" id="PS00470">
    <property type="entry name" value="IDH_IMDH"/>
    <property type="match status" value="1"/>
</dbReference>
<geneLocation type="plasmid">
    <name>pLeu</name>
    <name>pBAp1</name>
</geneLocation>
<keyword id="KW-0028">Amino-acid biosynthesis</keyword>
<keyword id="KW-0100">Branched-chain amino acid biosynthesis</keyword>
<keyword id="KW-0963">Cytoplasm</keyword>
<keyword id="KW-0432">Leucine biosynthesis</keyword>
<keyword id="KW-0460">Magnesium</keyword>
<keyword id="KW-0464">Manganese</keyword>
<keyword id="KW-0479">Metal-binding</keyword>
<keyword id="KW-0520">NAD</keyword>
<keyword id="KW-0560">Oxidoreductase</keyword>
<keyword id="KW-0614">Plasmid</keyword>
<protein>
    <recommendedName>
        <fullName evidence="1">3-isopropylmalate dehydrogenase</fullName>
        <ecNumber evidence="1">1.1.1.85</ecNumber>
    </recommendedName>
    <alternativeName>
        <fullName evidence="1">3-IPM-DH</fullName>
    </alternativeName>
    <alternativeName>
        <fullName evidence="1">Beta-IPM dehydrogenase</fullName>
        <shortName evidence="1">IMDH</shortName>
    </alternativeName>
</protein>
<evidence type="ECO:0000255" key="1">
    <source>
        <dbReference type="HAMAP-Rule" id="MF_01033"/>
    </source>
</evidence>
<reference key="1">
    <citation type="journal article" date="2001" name="J. Bacteriol.">
        <title>Vertical transmission of biosynthetic plasmids in aphid endosymbionts (Buchnera).</title>
        <authorList>
            <person name="Wernegreen J.J."/>
            <person name="Moran N.A."/>
        </authorList>
    </citation>
    <scope>NUCLEOTIDE SEQUENCE [GENOMIC DNA]</scope>
</reference>
<gene>
    <name evidence="1" type="primary">leuB</name>
</gene>
<name>LEU3_BUCUE</name>
<sequence length="364" mass="40542">MKKKYRIAVLPGDGIGPEVMQEAYKILNILKDHFLLPLEMKEFNIGGIAIDQEGIALPKNTLLGCENSDAILFGSVGGKKWDYLSIDKRPERAALLPLRKHFNLFSNLRPAKLYADLKYLSPLRSNIIKDGFDILCVRELTGGIYFGKPNGHSKKNDIEYAFDTEVYYDYEISRIAHLAFQLARNRKKKVCSLDKSNVLKSSILWKEIVEKISKNYPDVHLSHLYIDNAIMQIIKDPSQFDVILCSNLFGDIVSDECAAITGSIGMLPSASLNEKNFGLYEPAGGSAPDIAGKNIANPIAQILSVSMLVRHGMNLKKIADKIDESVVSVLKQGYRTADISNNSHNYLKTSEMGDIIANFLINGK</sequence>
<organism>
    <name type="scientific">Buchnera aphidicola subsp. Uroleucon erigeronensis</name>
    <dbReference type="NCBI Taxonomy" id="168385"/>
    <lineage>
        <taxon>Bacteria</taxon>
        <taxon>Pseudomonadati</taxon>
        <taxon>Pseudomonadota</taxon>
        <taxon>Gammaproteobacteria</taxon>
        <taxon>Enterobacterales</taxon>
        <taxon>Erwiniaceae</taxon>
        <taxon>Buchnera</taxon>
    </lineage>
</organism>